<protein>
    <recommendedName>
        <fullName evidence="1">Acyl carrier protein</fullName>
        <shortName evidence="1">ACP</shortName>
    </recommendedName>
</protein>
<proteinExistence type="inferred from homology"/>
<gene>
    <name evidence="1" type="primary">acpP</name>
    <name type="ordered locus">HP_0559</name>
</gene>
<feature type="chain" id="PRO_0000180144" description="Acyl carrier protein">
    <location>
        <begin position="1"/>
        <end position="78"/>
    </location>
</feature>
<feature type="domain" description="Carrier" evidence="2">
    <location>
        <begin position="1"/>
        <end position="76"/>
    </location>
</feature>
<feature type="modified residue" description="O-(pantetheine 4'-phosphoryl)serine" evidence="2">
    <location>
        <position position="36"/>
    </location>
</feature>
<reference key="1">
    <citation type="journal article" date="1997" name="Nature">
        <title>The complete genome sequence of the gastric pathogen Helicobacter pylori.</title>
        <authorList>
            <person name="Tomb J.-F."/>
            <person name="White O."/>
            <person name="Kerlavage A.R."/>
            <person name="Clayton R.A."/>
            <person name="Sutton G.G."/>
            <person name="Fleischmann R.D."/>
            <person name="Ketchum K.A."/>
            <person name="Klenk H.-P."/>
            <person name="Gill S.R."/>
            <person name="Dougherty B.A."/>
            <person name="Nelson K.E."/>
            <person name="Quackenbush J."/>
            <person name="Zhou L."/>
            <person name="Kirkness E.F."/>
            <person name="Peterson S.N."/>
            <person name="Loftus B.J."/>
            <person name="Richardson D.L."/>
            <person name="Dodson R.J."/>
            <person name="Khalak H.G."/>
            <person name="Glodek A."/>
            <person name="McKenney K."/>
            <person name="FitzGerald L.M."/>
            <person name="Lee N."/>
            <person name="Adams M.D."/>
            <person name="Hickey E.K."/>
            <person name="Berg D.E."/>
            <person name="Gocayne J.D."/>
            <person name="Utterback T.R."/>
            <person name="Peterson J.D."/>
            <person name="Kelley J.M."/>
            <person name="Cotton M.D."/>
            <person name="Weidman J.F."/>
            <person name="Fujii C."/>
            <person name="Bowman C."/>
            <person name="Watthey L."/>
            <person name="Wallin E."/>
            <person name="Hayes W.S."/>
            <person name="Borodovsky M."/>
            <person name="Karp P.D."/>
            <person name="Smith H.O."/>
            <person name="Fraser C.M."/>
            <person name="Venter J.C."/>
        </authorList>
    </citation>
    <scope>NUCLEOTIDE SEQUENCE [LARGE SCALE GENOMIC DNA]</scope>
    <source>
        <strain>ATCC 700392 / 26695</strain>
    </source>
</reference>
<sequence>MALFEDIQAVIAEQLNVDAVQVTPEAEFVKDLGADSLDVVELIMALEEKFGVEIPDEQAEKIINVGDVVKYIEDNKLA</sequence>
<comment type="function">
    <text evidence="1">Carrier of the growing fatty acid chain in fatty acid biosynthesis.</text>
</comment>
<comment type="pathway">
    <text evidence="1">Lipid metabolism; fatty acid biosynthesis.</text>
</comment>
<comment type="subcellular location">
    <subcellularLocation>
        <location evidence="1">Cytoplasm</location>
    </subcellularLocation>
</comment>
<comment type="PTM">
    <text evidence="1">4'-phosphopantetheine is transferred from CoA to a specific serine of apo-ACP by AcpS. This modification is essential for activity because fatty acids are bound in thioester linkage to the sulfhydryl of the prosthetic group.</text>
</comment>
<comment type="similarity">
    <text evidence="1">Belongs to the acyl carrier protein (ACP) family.</text>
</comment>
<keyword id="KW-0963">Cytoplasm</keyword>
<keyword id="KW-0275">Fatty acid biosynthesis</keyword>
<keyword id="KW-0276">Fatty acid metabolism</keyword>
<keyword id="KW-0444">Lipid biosynthesis</keyword>
<keyword id="KW-0443">Lipid metabolism</keyword>
<keyword id="KW-0596">Phosphopantetheine</keyword>
<keyword id="KW-0597">Phosphoprotein</keyword>
<keyword id="KW-1185">Reference proteome</keyword>
<organism>
    <name type="scientific">Helicobacter pylori (strain ATCC 700392 / 26695)</name>
    <name type="common">Campylobacter pylori</name>
    <dbReference type="NCBI Taxonomy" id="85962"/>
    <lineage>
        <taxon>Bacteria</taxon>
        <taxon>Pseudomonadati</taxon>
        <taxon>Campylobacterota</taxon>
        <taxon>Epsilonproteobacteria</taxon>
        <taxon>Campylobacterales</taxon>
        <taxon>Helicobacteraceae</taxon>
        <taxon>Helicobacter</taxon>
    </lineage>
</organism>
<dbReference type="EMBL" id="AE000511">
    <property type="protein sequence ID" value="AAD07626.1"/>
    <property type="molecule type" value="Genomic_DNA"/>
</dbReference>
<dbReference type="PIR" id="G64589">
    <property type="entry name" value="G64589"/>
</dbReference>
<dbReference type="RefSeq" id="NP_207354.1">
    <property type="nucleotide sequence ID" value="NC_000915.1"/>
</dbReference>
<dbReference type="RefSeq" id="WP_001163100.1">
    <property type="nucleotide sequence ID" value="NC_018939.1"/>
</dbReference>
<dbReference type="SMR" id="P56464"/>
<dbReference type="FunCoup" id="P56464">
    <property type="interactions" value="373"/>
</dbReference>
<dbReference type="IntAct" id="P56464">
    <property type="interactions" value="4"/>
</dbReference>
<dbReference type="STRING" id="85962.HP_0559"/>
<dbReference type="PaxDb" id="85962-C694_02890"/>
<dbReference type="EnsemblBacteria" id="AAD07626">
    <property type="protein sequence ID" value="AAD07626"/>
    <property type="gene ID" value="HP_0559"/>
</dbReference>
<dbReference type="KEGG" id="heo:C694_02890"/>
<dbReference type="KEGG" id="hpy:HP_0559"/>
<dbReference type="PATRIC" id="fig|85962.47.peg.605"/>
<dbReference type="eggNOG" id="COG0236">
    <property type="taxonomic scope" value="Bacteria"/>
</dbReference>
<dbReference type="InParanoid" id="P56464"/>
<dbReference type="OrthoDB" id="9804551at2"/>
<dbReference type="PhylomeDB" id="P56464"/>
<dbReference type="UniPathway" id="UPA00094"/>
<dbReference type="Proteomes" id="UP000000429">
    <property type="component" value="Chromosome"/>
</dbReference>
<dbReference type="GO" id="GO:0005829">
    <property type="term" value="C:cytosol"/>
    <property type="evidence" value="ECO:0000318"/>
    <property type="project" value="GO_Central"/>
</dbReference>
<dbReference type="GO" id="GO:0016020">
    <property type="term" value="C:membrane"/>
    <property type="evidence" value="ECO:0007669"/>
    <property type="project" value="GOC"/>
</dbReference>
<dbReference type="GO" id="GO:0000035">
    <property type="term" value="F:acyl binding"/>
    <property type="evidence" value="ECO:0000318"/>
    <property type="project" value="GO_Central"/>
</dbReference>
<dbReference type="GO" id="GO:0000036">
    <property type="term" value="F:acyl carrier activity"/>
    <property type="evidence" value="ECO:0000318"/>
    <property type="project" value="GO_Central"/>
</dbReference>
<dbReference type="GO" id="GO:0031177">
    <property type="term" value="F:phosphopantetheine binding"/>
    <property type="evidence" value="ECO:0007669"/>
    <property type="project" value="InterPro"/>
</dbReference>
<dbReference type="GO" id="GO:0009245">
    <property type="term" value="P:lipid A biosynthetic process"/>
    <property type="evidence" value="ECO:0000318"/>
    <property type="project" value="GO_Central"/>
</dbReference>
<dbReference type="FunFam" id="1.10.1200.10:FF:000006">
    <property type="entry name" value="Acyl carrier protein"/>
    <property type="match status" value="1"/>
</dbReference>
<dbReference type="Gene3D" id="1.10.1200.10">
    <property type="entry name" value="ACP-like"/>
    <property type="match status" value="1"/>
</dbReference>
<dbReference type="HAMAP" id="MF_01217">
    <property type="entry name" value="Acyl_carrier"/>
    <property type="match status" value="1"/>
</dbReference>
<dbReference type="InterPro" id="IPR003231">
    <property type="entry name" value="ACP"/>
</dbReference>
<dbReference type="InterPro" id="IPR036736">
    <property type="entry name" value="ACP-like_sf"/>
</dbReference>
<dbReference type="InterPro" id="IPR020806">
    <property type="entry name" value="PKS_PP-bd"/>
</dbReference>
<dbReference type="InterPro" id="IPR009081">
    <property type="entry name" value="PP-bd_ACP"/>
</dbReference>
<dbReference type="InterPro" id="IPR006162">
    <property type="entry name" value="Ppantetheine_attach_site"/>
</dbReference>
<dbReference type="NCBIfam" id="TIGR00517">
    <property type="entry name" value="acyl_carrier"/>
    <property type="match status" value="1"/>
</dbReference>
<dbReference type="NCBIfam" id="NF002148">
    <property type="entry name" value="PRK00982.1-2"/>
    <property type="match status" value="1"/>
</dbReference>
<dbReference type="NCBIfam" id="NF002150">
    <property type="entry name" value="PRK00982.1-4"/>
    <property type="match status" value="1"/>
</dbReference>
<dbReference type="NCBIfam" id="NF002151">
    <property type="entry name" value="PRK00982.1-5"/>
    <property type="match status" value="1"/>
</dbReference>
<dbReference type="PANTHER" id="PTHR20863">
    <property type="entry name" value="ACYL CARRIER PROTEIN"/>
    <property type="match status" value="1"/>
</dbReference>
<dbReference type="PANTHER" id="PTHR20863:SF76">
    <property type="entry name" value="CARRIER DOMAIN-CONTAINING PROTEIN"/>
    <property type="match status" value="1"/>
</dbReference>
<dbReference type="Pfam" id="PF00550">
    <property type="entry name" value="PP-binding"/>
    <property type="match status" value="1"/>
</dbReference>
<dbReference type="SMART" id="SM00823">
    <property type="entry name" value="PKS_PP"/>
    <property type="match status" value="1"/>
</dbReference>
<dbReference type="SUPFAM" id="SSF47336">
    <property type="entry name" value="ACP-like"/>
    <property type="match status" value="1"/>
</dbReference>
<dbReference type="PROSITE" id="PS50075">
    <property type="entry name" value="CARRIER"/>
    <property type="match status" value="1"/>
</dbReference>
<dbReference type="PROSITE" id="PS00012">
    <property type="entry name" value="PHOSPHOPANTETHEINE"/>
    <property type="match status" value="1"/>
</dbReference>
<evidence type="ECO:0000255" key="1">
    <source>
        <dbReference type="HAMAP-Rule" id="MF_01217"/>
    </source>
</evidence>
<evidence type="ECO:0000255" key="2">
    <source>
        <dbReference type="PROSITE-ProRule" id="PRU00258"/>
    </source>
</evidence>
<name>ACP_HELPY</name>
<accession>P56464</accession>